<name>C135A_MYCTO</name>
<organism>
    <name type="scientific">Mycobacterium tuberculosis (strain CDC 1551 / Oshkosh)</name>
    <dbReference type="NCBI Taxonomy" id="83331"/>
    <lineage>
        <taxon>Bacteria</taxon>
        <taxon>Bacillati</taxon>
        <taxon>Actinomycetota</taxon>
        <taxon>Actinomycetes</taxon>
        <taxon>Mycobacteriales</taxon>
        <taxon>Mycobacteriaceae</taxon>
        <taxon>Mycobacterium</taxon>
        <taxon>Mycobacterium tuberculosis complex</taxon>
    </lineage>
</organism>
<comment type="cofactor">
    <cofactor evidence="1">
        <name>heme</name>
        <dbReference type="ChEBI" id="CHEBI:30413"/>
    </cofactor>
</comment>
<comment type="similarity">
    <text evidence="2">Belongs to the cytochrome P450 family.</text>
</comment>
<reference key="1">
    <citation type="journal article" date="2002" name="J. Bacteriol.">
        <title>Whole-genome comparison of Mycobacterium tuberculosis clinical and laboratory strains.</title>
        <authorList>
            <person name="Fleischmann R.D."/>
            <person name="Alland D."/>
            <person name="Eisen J.A."/>
            <person name="Carpenter L."/>
            <person name="White O."/>
            <person name="Peterson J.D."/>
            <person name="DeBoy R.T."/>
            <person name="Dodson R.J."/>
            <person name="Gwinn M.L."/>
            <person name="Haft D.H."/>
            <person name="Hickey E.K."/>
            <person name="Kolonay J.F."/>
            <person name="Nelson W.C."/>
            <person name="Umayam L.A."/>
            <person name="Ermolaeva M.D."/>
            <person name="Salzberg S.L."/>
            <person name="Delcher A."/>
            <person name="Utterback T.R."/>
            <person name="Weidman J.F."/>
            <person name="Khouri H.M."/>
            <person name="Gill J."/>
            <person name="Mikula A."/>
            <person name="Bishai W."/>
            <person name="Jacobs W.R. Jr."/>
            <person name="Venter J.C."/>
            <person name="Fraser C.M."/>
        </authorList>
    </citation>
    <scope>NUCLEOTIDE SEQUENCE [LARGE SCALE GENOMIC DNA]</scope>
    <source>
        <strain>CDC 1551 / Oshkosh</strain>
    </source>
</reference>
<feature type="chain" id="PRO_0000426923" description="Putative cytochrome P450 135A1">
    <location>
        <begin position="1"/>
        <end position="449"/>
    </location>
</feature>
<feature type="binding site" description="axial binding residue" evidence="1">
    <location>
        <position position="383"/>
    </location>
    <ligand>
        <name>heme</name>
        <dbReference type="ChEBI" id="CHEBI:30413"/>
    </ligand>
    <ligandPart>
        <name>Fe</name>
        <dbReference type="ChEBI" id="CHEBI:18248"/>
    </ligandPart>
</feature>
<sequence>MASTLTTGLPPGPRLPRYLQSVLYLRFREWFLPAMHRKYGDVFSLRVPPYADNLVVYTRPEHIKEIFAADPRSLHAGEGNHILGFVMGEHSVLMTDEAEHARMRSLLMPAFTRAALRGYRDMIASVAREHITRWRPHATINSLDHMNALTLDIILRVVFGVTDPKVKAELTSRLQQIINIHPAILAGVPYPSLKRMNPWKRFFHNQTKIDEILYREIASRRIDSDLTARTDVLSRLLQTKDTPTKPLTDAELRDQLITLLLAGHETTAAALSWTLWELAHAPEIQSQVVWAAVGGDDGFLEAVLKEGMRRHTVIASTARKVTAPAEIGGWRLPAGTVVNTSILLAHASEVSHPKPTEFRPSRFLDGSVAPNTWLPFGGGVRRCLGFGFALTEGAVILQEIFRRFTITAAGPSKGETPLVRNITTVPKHGAHLRLIPQRRLGGLGDSDPP</sequence>
<dbReference type="EC" id="1.14.-.-"/>
<dbReference type="EMBL" id="AE000516">
    <property type="protein sequence ID" value="AAK44565.1"/>
    <property type="molecule type" value="Genomic_DNA"/>
</dbReference>
<dbReference type="PIR" id="H70526">
    <property type="entry name" value="H70526"/>
</dbReference>
<dbReference type="RefSeq" id="WP_003401650.1">
    <property type="nucleotide sequence ID" value="NZ_KK341227.1"/>
</dbReference>
<dbReference type="SMR" id="P9WPN0"/>
<dbReference type="KEGG" id="mtc:MT0342"/>
<dbReference type="PATRIC" id="fig|83331.31.peg.362"/>
<dbReference type="HOGENOM" id="CLU_001570_5_1_11"/>
<dbReference type="Proteomes" id="UP000001020">
    <property type="component" value="Chromosome"/>
</dbReference>
<dbReference type="GO" id="GO:0020037">
    <property type="term" value="F:heme binding"/>
    <property type="evidence" value="ECO:0007669"/>
    <property type="project" value="InterPro"/>
</dbReference>
<dbReference type="GO" id="GO:0005506">
    <property type="term" value="F:iron ion binding"/>
    <property type="evidence" value="ECO:0007669"/>
    <property type="project" value="InterPro"/>
</dbReference>
<dbReference type="GO" id="GO:0004497">
    <property type="term" value="F:monooxygenase activity"/>
    <property type="evidence" value="ECO:0007669"/>
    <property type="project" value="UniProtKB-KW"/>
</dbReference>
<dbReference type="GO" id="GO:0016705">
    <property type="term" value="F:oxidoreductase activity, acting on paired donors, with incorporation or reduction of molecular oxygen"/>
    <property type="evidence" value="ECO:0007669"/>
    <property type="project" value="InterPro"/>
</dbReference>
<dbReference type="CDD" id="cd11053">
    <property type="entry name" value="CYP110-like"/>
    <property type="match status" value="1"/>
</dbReference>
<dbReference type="Gene3D" id="1.10.630.10">
    <property type="entry name" value="Cytochrome P450"/>
    <property type="match status" value="1"/>
</dbReference>
<dbReference type="InterPro" id="IPR001128">
    <property type="entry name" value="Cyt_P450"/>
</dbReference>
<dbReference type="InterPro" id="IPR017972">
    <property type="entry name" value="Cyt_P450_CS"/>
</dbReference>
<dbReference type="InterPro" id="IPR002401">
    <property type="entry name" value="Cyt_P450_E_grp-I"/>
</dbReference>
<dbReference type="InterPro" id="IPR036396">
    <property type="entry name" value="Cyt_P450_sf"/>
</dbReference>
<dbReference type="InterPro" id="IPR050121">
    <property type="entry name" value="Cytochrome_P450_monoxygenase"/>
</dbReference>
<dbReference type="PANTHER" id="PTHR24305">
    <property type="entry name" value="CYTOCHROME P450"/>
    <property type="match status" value="1"/>
</dbReference>
<dbReference type="PANTHER" id="PTHR24305:SF166">
    <property type="entry name" value="CYTOCHROME P450 12A4, MITOCHONDRIAL-RELATED"/>
    <property type="match status" value="1"/>
</dbReference>
<dbReference type="Pfam" id="PF00067">
    <property type="entry name" value="p450"/>
    <property type="match status" value="1"/>
</dbReference>
<dbReference type="PRINTS" id="PR00463">
    <property type="entry name" value="EP450I"/>
</dbReference>
<dbReference type="PRINTS" id="PR00385">
    <property type="entry name" value="P450"/>
</dbReference>
<dbReference type="SUPFAM" id="SSF48264">
    <property type="entry name" value="Cytochrome P450"/>
    <property type="match status" value="1"/>
</dbReference>
<dbReference type="PROSITE" id="PS00086">
    <property type="entry name" value="CYTOCHROME_P450"/>
    <property type="match status" value="1"/>
</dbReference>
<accession>P9WPN0</accession>
<accession>L0T6C2</accession>
<accession>O08447</accession>
<proteinExistence type="inferred from homology"/>
<evidence type="ECO:0000250" key="1"/>
<evidence type="ECO:0000305" key="2"/>
<keyword id="KW-0349">Heme</keyword>
<keyword id="KW-0408">Iron</keyword>
<keyword id="KW-0479">Metal-binding</keyword>
<keyword id="KW-0503">Monooxygenase</keyword>
<keyword id="KW-0560">Oxidoreductase</keyword>
<keyword id="KW-1185">Reference proteome</keyword>
<protein>
    <recommendedName>
        <fullName>Putative cytochrome P450 135A1</fullName>
        <ecNumber>1.14.-.-</ecNumber>
    </recommendedName>
</protein>
<gene>
    <name type="primary">cyp135A1</name>
    <name type="ordered locus">MT0342</name>
</gene>